<protein>
    <recommendedName>
        <fullName evidence="1">Urease accessory protein UreE</fullName>
    </recommendedName>
</protein>
<organism>
    <name type="scientific">Brucella abortus biovar 1 (strain 9-941)</name>
    <dbReference type="NCBI Taxonomy" id="262698"/>
    <lineage>
        <taxon>Bacteria</taxon>
        <taxon>Pseudomonadati</taxon>
        <taxon>Pseudomonadota</taxon>
        <taxon>Alphaproteobacteria</taxon>
        <taxon>Hyphomicrobiales</taxon>
        <taxon>Brucellaceae</taxon>
        <taxon>Brucella/Ochrobactrum group</taxon>
        <taxon>Brucella</taxon>
    </lineage>
</organism>
<keyword id="KW-0143">Chaperone</keyword>
<keyword id="KW-0963">Cytoplasm</keyword>
<keyword id="KW-0533">Nickel</keyword>
<keyword id="KW-0996">Nickel insertion</keyword>
<evidence type="ECO:0000255" key="1">
    <source>
        <dbReference type="HAMAP-Rule" id="MF_00822"/>
    </source>
</evidence>
<evidence type="ECO:0000256" key="2">
    <source>
        <dbReference type="SAM" id="MobiDB-lite"/>
    </source>
</evidence>
<dbReference type="EMBL" id="AE017223">
    <property type="protein sequence ID" value="AAX73700.1"/>
    <property type="molecule type" value="Genomic_DNA"/>
</dbReference>
<dbReference type="RefSeq" id="WP_002963435.1">
    <property type="nucleotide sequence ID" value="NC_006932.1"/>
</dbReference>
<dbReference type="SMR" id="P0C144"/>
<dbReference type="EnsemblBacteria" id="AAX73700">
    <property type="protein sequence ID" value="AAX73700"/>
    <property type="gene ID" value="BruAb1_0297"/>
</dbReference>
<dbReference type="GeneID" id="93017257"/>
<dbReference type="KEGG" id="bmb:BruAb1_0297"/>
<dbReference type="HOGENOM" id="CLU_093757_1_0_5"/>
<dbReference type="Proteomes" id="UP000000540">
    <property type="component" value="Chromosome I"/>
</dbReference>
<dbReference type="GO" id="GO:0005737">
    <property type="term" value="C:cytoplasm"/>
    <property type="evidence" value="ECO:0007669"/>
    <property type="project" value="UniProtKB-SubCell"/>
</dbReference>
<dbReference type="GO" id="GO:0016151">
    <property type="term" value="F:nickel cation binding"/>
    <property type="evidence" value="ECO:0007669"/>
    <property type="project" value="UniProtKB-UniRule"/>
</dbReference>
<dbReference type="GO" id="GO:0051082">
    <property type="term" value="F:unfolded protein binding"/>
    <property type="evidence" value="ECO:0007669"/>
    <property type="project" value="UniProtKB-UniRule"/>
</dbReference>
<dbReference type="GO" id="GO:0006457">
    <property type="term" value="P:protein folding"/>
    <property type="evidence" value="ECO:0007669"/>
    <property type="project" value="InterPro"/>
</dbReference>
<dbReference type="GO" id="GO:0065003">
    <property type="term" value="P:protein-containing complex assembly"/>
    <property type="evidence" value="ECO:0007669"/>
    <property type="project" value="InterPro"/>
</dbReference>
<dbReference type="GO" id="GO:0019627">
    <property type="term" value="P:urea metabolic process"/>
    <property type="evidence" value="ECO:0007669"/>
    <property type="project" value="InterPro"/>
</dbReference>
<dbReference type="CDD" id="cd00571">
    <property type="entry name" value="UreE"/>
    <property type="match status" value="1"/>
</dbReference>
<dbReference type="Gene3D" id="2.60.260.20">
    <property type="entry name" value="Urease metallochaperone UreE, N-terminal domain"/>
    <property type="match status" value="1"/>
</dbReference>
<dbReference type="Gene3D" id="3.30.70.790">
    <property type="entry name" value="UreE, C-terminal domain"/>
    <property type="match status" value="1"/>
</dbReference>
<dbReference type="HAMAP" id="MF_00822">
    <property type="entry name" value="UreE"/>
    <property type="match status" value="1"/>
</dbReference>
<dbReference type="InterPro" id="IPR012406">
    <property type="entry name" value="UreE"/>
</dbReference>
<dbReference type="InterPro" id="IPR007864">
    <property type="entry name" value="UreE_C_dom"/>
</dbReference>
<dbReference type="InterPro" id="IPR004029">
    <property type="entry name" value="UreE_N"/>
</dbReference>
<dbReference type="InterPro" id="IPR036118">
    <property type="entry name" value="UreE_N_sf"/>
</dbReference>
<dbReference type="NCBIfam" id="NF009760">
    <property type="entry name" value="PRK13261.2-6"/>
    <property type="match status" value="1"/>
</dbReference>
<dbReference type="Pfam" id="PF05194">
    <property type="entry name" value="UreE_C"/>
    <property type="match status" value="1"/>
</dbReference>
<dbReference type="Pfam" id="PF02814">
    <property type="entry name" value="UreE_N"/>
    <property type="match status" value="1"/>
</dbReference>
<dbReference type="PIRSF" id="PIRSF036402">
    <property type="entry name" value="Ureas_acces_UreE"/>
    <property type="match status" value="1"/>
</dbReference>
<dbReference type="SMART" id="SM00988">
    <property type="entry name" value="UreE_N"/>
    <property type="match status" value="1"/>
</dbReference>
<dbReference type="SUPFAM" id="SSF69737">
    <property type="entry name" value="Urease metallochaperone UreE, C-terminal domain"/>
    <property type="match status" value="1"/>
</dbReference>
<dbReference type="SUPFAM" id="SSF69287">
    <property type="entry name" value="Urease metallochaperone UreE, N-terminal domain"/>
    <property type="match status" value="1"/>
</dbReference>
<sequence>MFRAIAIIRAHEVIDAVPASHIVLERDERHLRRKAITLENGEKILADFAEPVVLEHGDRLVLDDGREIEIRAASEELYEIRGRDPRHIAELAWHIGNRHLAAQIETDHIFILRDHVIRVMLEGLGATVTDVVAIFSPLRGAYSGGHQHHHGHDHDHGHHGHDHDHHHPDHE</sequence>
<comment type="function">
    <text evidence="1">Involved in urease metallocenter assembly. Binds nickel. Probably functions as a nickel donor during metallocenter assembly.</text>
</comment>
<comment type="subcellular location">
    <subcellularLocation>
        <location evidence="1">Cytoplasm</location>
    </subcellularLocation>
</comment>
<comment type="similarity">
    <text evidence="1">Belongs to the UreE family.</text>
</comment>
<proteinExistence type="inferred from homology"/>
<name>UREE_BRUAB</name>
<reference key="1">
    <citation type="journal article" date="2005" name="J. Bacteriol.">
        <title>Completion of the genome sequence of Brucella abortus and comparison to the highly similar genomes of Brucella melitensis and Brucella suis.</title>
        <authorList>
            <person name="Halling S.M."/>
            <person name="Peterson-Burch B.D."/>
            <person name="Bricker B.J."/>
            <person name="Zuerner R.L."/>
            <person name="Qing Z."/>
            <person name="Li L.-L."/>
            <person name="Kapur V."/>
            <person name="Alt D.P."/>
            <person name="Olsen S.C."/>
        </authorList>
    </citation>
    <scope>NUCLEOTIDE SEQUENCE [LARGE SCALE GENOMIC DNA]</scope>
    <source>
        <strain>9-941</strain>
    </source>
</reference>
<accession>P0C144</accession>
<accession>Q57F84</accession>
<accession>Q93T80</accession>
<feature type="chain" id="PRO_0000223404" description="Urease accessory protein UreE">
    <location>
        <begin position="1"/>
        <end position="171"/>
    </location>
</feature>
<feature type="region of interest" description="Disordered" evidence="2">
    <location>
        <begin position="143"/>
        <end position="171"/>
    </location>
</feature>
<feature type="compositionally biased region" description="Basic and acidic residues" evidence="2">
    <location>
        <begin position="152"/>
        <end position="171"/>
    </location>
</feature>
<gene>
    <name evidence="1" type="primary">ureE</name>
    <name type="ordered locus">BruAb1_0297</name>
</gene>